<name>SLMA_PHOPR</name>
<proteinExistence type="inferred from homology"/>
<feature type="chain" id="PRO_0000198976" description="Nucleoid occlusion factor SlmA">
    <location>
        <begin position="1"/>
        <end position="196"/>
    </location>
</feature>
<feature type="domain" description="HTH tetR-type" evidence="1">
    <location>
        <begin position="7"/>
        <end position="68"/>
    </location>
</feature>
<feature type="DNA-binding region" description="H-T-H motif" evidence="1">
    <location>
        <begin position="31"/>
        <end position="50"/>
    </location>
</feature>
<feature type="coiled-coil region" evidence="1">
    <location>
        <begin position="115"/>
        <end position="142"/>
    </location>
</feature>
<accession>Q6LVN6</accession>
<organism>
    <name type="scientific">Photobacterium profundum (strain SS9)</name>
    <dbReference type="NCBI Taxonomy" id="298386"/>
    <lineage>
        <taxon>Bacteria</taxon>
        <taxon>Pseudomonadati</taxon>
        <taxon>Pseudomonadota</taxon>
        <taxon>Gammaproteobacteria</taxon>
        <taxon>Vibrionales</taxon>
        <taxon>Vibrionaceae</taxon>
        <taxon>Photobacterium</taxon>
    </lineage>
</organism>
<sequence length="196" mass="22684">MAGNKKTNRREEILQALAQMLESTQGSQRITTAKLAAQVGVSEAALYRHFPSKARMFEGLIEFIEDSISTRINRILDDEKDTMNRLRMVLQLILVFAERNPGLTRIMTGHALMFEQDRLQSRINQLFERIETQLRQVLRERKLREGKGFPVDESVLAAQLLGQVEGSLNRYVRSNFKYKPTENFDHYWQLLSAQLG</sequence>
<gene>
    <name evidence="1" type="primary">slmA</name>
    <name type="ordered locus">PBPRA0200</name>
</gene>
<dbReference type="EMBL" id="CR378663">
    <property type="protein sequence ID" value="CAG18639.1"/>
    <property type="molecule type" value="Genomic_DNA"/>
</dbReference>
<dbReference type="RefSeq" id="WP_011217016.1">
    <property type="nucleotide sequence ID" value="NC_006370.1"/>
</dbReference>
<dbReference type="SMR" id="Q6LVN6"/>
<dbReference type="STRING" id="298386.PBPRA0200"/>
<dbReference type="KEGG" id="ppr:PBPRA0200"/>
<dbReference type="eggNOG" id="COG1309">
    <property type="taxonomic scope" value="Bacteria"/>
</dbReference>
<dbReference type="HOGENOM" id="CLU_069356_5_0_6"/>
<dbReference type="Proteomes" id="UP000000593">
    <property type="component" value="Chromosome 1"/>
</dbReference>
<dbReference type="GO" id="GO:0043590">
    <property type="term" value="C:bacterial nucleoid"/>
    <property type="evidence" value="ECO:0007669"/>
    <property type="project" value="UniProtKB-UniRule"/>
</dbReference>
<dbReference type="GO" id="GO:0005737">
    <property type="term" value="C:cytoplasm"/>
    <property type="evidence" value="ECO:0007669"/>
    <property type="project" value="UniProtKB-UniRule"/>
</dbReference>
<dbReference type="GO" id="GO:0003700">
    <property type="term" value="F:DNA-binding transcription factor activity"/>
    <property type="evidence" value="ECO:0007669"/>
    <property type="project" value="TreeGrafter"/>
</dbReference>
<dbReference type="GO" id="GO:0000976">
    <property type="term" value="F:transcription cis-regulatory region binding"/>
    <property type="evidence" value="ECO:0007669"/>
    <property type="project" value="TreeGrafter"/>
</dbReference>
<dbReference type="GO" id="GO:0051301">
    <property type="term" value="P:cell division"/>
    <property type="evidence" value="ECO:0007669"/>
    <property type="project" value="UniProtKB-KW"/>
</dbReference>
<dbReference type="GO" id="GO:0010974">
    <property type="term" value="P:negative regulation of division septum assembly"/>
    <property type="evidence" value="ECO:0007669"/>
    <property type="project" value="InterPro"/>
</dbReference>
<dbReference type="FunFam" id="1.10.357.10:FF:000002">
    <property type="entry name" value="Nucleoid occlusion factor SlmA"/>
    <property type="match status" value="1"/>
</dbReference>
<dbReference type="Gene3D" id="1.10.357.10">
    <property type="entry name" value="Tetracycline Repressor, domain 2"/>
    <property type="match status" value="1"/>
</dbReference>
<dbReference type="HAMAP" id="MF_01839">
    <property type="entry name" value="NO_factor_SlmA"/>
    <property type="match status" value="1"/>
</dbReference>
<dbReference type="InterPro" id="IPR023772">
    <property type="entry name" value="DNA-bd_HTH_TetR-type_CS"/>
</dbReference>
<dbReference type="InterPro" id="IPR009057">
    <property type="entry name" value="Homeodomain-like_sf"/>
</dbReference>
<dbReference type="InterPro" id="IPR050109">
    <property type="entry name" value="HTH-type_TetR-like_transc_reg"/>
</dbReference>
<dbReference type="InterPro" id="IPR001647">
    <property type="entry name" value="HTH_TetR"/>
</dbReference>
<dbReference type="InterPro" id="IPR023769">
    <property type="entry name" value="NO_SlmA"/>
</dbReference>
<dbReference type="InterPro" id="IPR054580">
    <property type="entry name" value="SlmA-like_C"/>
</dbReference>
<dbReference type="InterPro" id="IPR036271">
    <property type="entry name" value="Tet_transcr_reg_TetR-rel_C_sf"/>
</dbReference>
<dbReference type="NCBIfam" id="NF007015">
    <property type="entry name" value="PRK09480.1"/>
    <property type="match status" value="1"/>
</dbReference>
<dbReference type="PANTHER" id="PTHR30055">
    <property type="entry name" value="HTH-TYPE TRANSCRIPTIONAL REGULATOR RUTR"/>
    <property type="match status" value="1"/>
</dbReference>
<dbReference type="PANTHER" id="PTHR30055:SF183">
    <property type="entry name" value="NUCLEOID OCCLUSION FACTOR SLMA"/>
    <property type="match status" value="1"/>
</dbReference>
<dbReference type="Pfam" id="PF22276">
    <property type="entry name" value="SlmA-like_C"/>
    <property type="match status" value="1"/>
</dbReference>
<dbReference type="Pfam" id="PF00440">
    <property type="entry name" value="TetR_N"/>
    <property type="match status" value="1"/>
</dbReference>
<dbReference type="SUPFAM" id="SSF46689">
    <property type="entry name" value="Homeodomain-like"/>
    <property type="match status" value="1"/>
</dbReference>
<dbReference type="SUPFAM" id="SSF48498">
    <property type="entry name" value="Tetracyclin repressor-like, C-terminal domain"/>
    <property type="match status" value="1"/>
</dbReference>
<dbReference type="PROSITE" id="PS01081">
    <property type="entry name" value="HTH_TETR_1"/>
    <property type="match status" value="1"/>
</dbReference>
<dbReference type="PROSITE" id="PS50977">
    <property type="entry name" value="HTH_TETR_2"/>
    <property type="match status" value="1"/>
</dbReference>
<reference key="1">
    <citation type="journal article" date="2005" name="Science">
        <title>Life at depth: Photobacterium profundum genome sequence and expression analysis.</title>
        <authorList>
            <person name="Vezzi A."/>
            <person name="Campanaro S."/>
            <person name="D'Angelo M."/>
            <person name="Simonato F."/>
            <person name="Vitulo N."/>
            <person name="Lauro F.M."/>
            <person name="Cestaro A."/>
            <person name="Malacrida G."/>
            <person name="Simionati B."/>
            <person name="Cannata N."/>
            <person name="Romualdi C."/>
            <person name="Bartlett D.H."/>
            <person name="Valle G."/>
        </authorList>
    </citation>
    <scope>NUCLEOTIDE SEQUENCE [LARGE SCALE GENOMIC DNA]</scope>
    <source>
        <strain>ATCC BAA-1253 / SS9</strain>
    </source>
</reference>
<protein>
    <recommendedName>
        <fullName evidence="1">Nucleoid occlusion factor SlmA</fullName>
    </recommendedName>
</protein>
<comment type="function">
    <text evidence="1">Required for nucleoid occlusion (NO) phenomenon, which prevents Z-ring formation and cell division over the nucleoid. Acts as a DNA-associated cell division inhibitor that binds simultaneously chromosomal DNA and FtsZ, and disrupts the assembly of FtsZ polymers. SlmA-DNA-binding sequences (SBS) are dispersed on non-Ter regions of the chromosome, preventing FtsZ polymerization at these regions.</text>
</comment>
<comment type="subunit">
    <text evidence="1">Homodimer. Interacts with FtsZ.</text>
</comment>
<comment type="subcellular location">
    <subcellularLocation>
        <location evidence="1">Cytoplasm</location>
        <location evidence="1">Nucleoid</location>
    </subcellularLocation>
</comment>
<comment type="similarity">
    <text evidence="1">Belongs to the nucleoid occlusion factor SlmA family.</text>
</comment>
<evidence type="ECO:0000255" key="1">
    <source>
        <dbReference type="HAMAP-Rule" id="MF_01839"/>
    </source>
</evidence>
<keyword id="KW-0131">Cell cycle</keyword>
<keyword id="KW-0132">Cell division</keyword>
<keyword id="KW-0175">Coiled coil</keyword>
<keyword id="KW-0963">Cytoplasm</keyword>
<keyword id="KW-0238">DNA-binding</keyword>
<keyword id="KW-1185">Reference proteome</keyword>